<keyword id="KW-0963">Cytoplasm</keyword>
<keyword id="KW-0489">Methyltransferase</keyword>
<keyword id="KW-1185">Reference proteome</keyword>
<keyword id="KW-0698">rRNA processing</keyword>
<keyword id="KW-0949">S-adenosyl-L-methionine</keyword>
<keyword id="KW-0808">Transferase</keyword>
<sequence length="366" mass="41905">MNKVVLLCRPGFEKECAAEITDKAGQREIFGFARVKENAGYVIYECYQPDDGDKLIRELPFSSLIFARQWFVVGELLQHLPPEDRITPIVGMLQGVVEKGGELRVEVADTNESKELLKFCRKFTVPLRAALRDAGVLANYETPKRPVVHVFFIAPGCCYTGYSYSNNNSPFYMGIPRLKFPADAPSRSTLKLEEAFHVFIPADEWDERLANGMWAVDLGACPGGWTYQLVKRNMWVYSVDNGPMAQSLMDTGQVTWLREDGFKFRPTRSNISWMVCDMVEKPAKVAALMAQWLVNGWCRETIFNLKLPMKKRYEEVSHNLAYIQAQLDEHGINAQIQARQLYHDREEVTVHVRRIWAAVGGRRDER</sequence>
<reference key="1">
    <citation type="journal article" date="2009" name="PLoS Genet.">
        <title>Organised genome dynamics in the Escherichia coli species results in highly diverse adaptive paths.</title>
        <authorList>
            <person name="Touchon M."/>
            <person name="Hoede C."/>
            <person name="Tenaillon O."/>
            <person name="Barbe V."/>
            <person name="Baeriswyl S."/>
            <person name="Bidet P."/>
            <person name="Bingen E."/>
            <person name="Bonacorsi S."/>
            <person name="Bouchier C."/>
            <person name="Bouvet O."/>
            <person name="Calteau A."/>
            <person name="Chiapello H."/>
            <person name="Clermont O."/>
            <person name="Cruveiller S."/>
            <person name="Danchin A."/>
            <person name="Diard M."/>
            <person name="Dossat C."/>
            <person name="Karoui M.E."/>
            <person name="Frapy E."/>
            <person name="Garry L."/>
            <person name="Ghigo J.M."/>
            <person name="Gilles A.M."/>
            <person name="Johnson J."/>
            <person name="Le Bouguenec C."/>
            <person name="Lescat M."/>
            <person name="Mangenot S."/>
            <person name="Martinez-Jehanne V."/>
            <person name="Matic I."/>
            <person name="Nassif X."/>
            <person name="Oztas S."/>
            <person name="Petit M.A."/>
            <person name="Pichon C."/>
            <person name="Rouy Z."/>
            <person name="Ruf C.S."/>
            <person name="Schneider D."/>
            <person name="Tourret J."/>
            <person name="Vacherie B."/>
            <person name="Vallenet D."/>
            <person name="Medigue C."/>
            <person name="Rocha E.P.C."/>
            <person name="Denamur E."/>
        </authorList>
    </citation>
    <scope>NUCLEOTIDE SEQUENCE [LARGE SCALE GENOMIC DNA]</scope>
    <source>
        <strain>55989 / EAEC</strain>
    </source>
</reference>
<feature type="chain" id="PRO_1000185319" description="Ribosomal RNA large subunit methyltransferase M">
    <location>
        <begin position="1"/>
        <end position="366"/>
    </location>
</feature>
<feature type="active site" description="Proton acceptor" evidence="1">
    <location>
        <position position="306"/>
    </location>
</feature>
<feature type="binding site" evidence="1">
    <location>
        <position position="188"/>
    </location>
    <ligand>
        <name>S-adenosyl-L-methionine</name>
        <dbReference type="ChEBI" id="CHEBI:59789"/>
    </ligand>
</feature>
<feature type="binding site" evidence="1">
    <location>
        <begin position="221"/>
        <end position="224"/>
    </location>
    <ligand>
        <name>S-adenosyl-L-methionine</name>
        <dbReference type="ChEBI" id="CHEBI:59789"/>
    </ligand>
</feature>
<feature type="binding site" evidence="1">
    <location>
        <position position="240"/>
    </location>
    <ligand>
        <name>S-adenosyl-L-methionine</name>
        <dbReference type="ChEBI" id="CHEBI:59789"/>
    </ligand>
</feature>
<feature type="binding site" evidence="1">
    <location>
        <position position="260"/>
    </location>
    <ligand>
        <name>S-adenosyl-L-methionine</name>
        <dbReference type="ChEBI" id="CHEBI:59789"/>
    </ligand>
</feature>
<feature type="binding site" evidence="1">
    <location>
        <position position="277"/>
    </location>
    <ligand>
        <name>S-adenosyl-L-methionine</name>
        <dbReference type="ChEBI" id="CHEBI:59789"/>
    </ligand>
</feature>
<accession>B7LEY3</accession>
<proteinExistence type="inferred from homology"/>
<dbReference type="EC" id="2.1.1.186" evidence="1"/>
<dbReference type="EMBL" id="CU928145">
    <property type="protein sequence ID" value="CAU98984.1"/>
    <property type="molecule type" value="Genomic_DNA"/>
</dbReference>
<dbReference type="RefSeq" id="WP_001045520.1">
    <property type="nucleotide sequence ID" value="NZ_CP028304.1"/>
</dbReference>
<dbReference type="SMR" id="B7LEY3"/>
<dbReference type="GeneID" id="75203803"/>
<dbReference type="KEGG" id="eck:EC55989_3085"/>
<dbReference type="HOGENOM" id="CLU_043780_0_0_6"/>
<dbReference type="Proteomes" id="UP000000746">
    <property type="component" value="Chromosome"/>
</dbReference>
<dbReference type="GO" id="GO:0005737">
    <property type="term" value="C:cytoplasm"/>
    <property type="evidence" value="ECO:0007669"/>
    <property type="project" value="UniProtKB-SubCell"/>
</dbReference>
<dbReference type="GO" id="GO:0008757">
    <property type="term" value="F:S-adenosylmethionine-dependent methyltransferase activity"/>
    <property type="evidence" value="ECO:0007669"/>
    <property type="project" value="UniProtKB-UniRule"/>
</dbReference>
<dbReference type="GO" id="GO:0032259">
    <property type="term" value="P:methylation"/>
    <property type="evidence" value="ECO:0007669"/>
    <property type="project" value="UniProtKB-KW"/>
</dbReference>
<dbReference type="GO" id="GO:0006364">
    <property type="term" value="P:rRNA processing"/>
    <property type="evidence" value="ECO:0007669"/>
    <property type="project" value="UniProtKB-UniRule"/>
</dbReference>
<dbReference type="FunFam" id="3.30.2300.20:FF:000001">
    <property type="entry name" value="Ribosomal RNA large subunit methyltransferase M"/>
    <property type="match status" value="1"/>
</dbReference>
<dbReference type="FunFam" id="3.30.70.2810:FF:000001">
    <property type="entry name" value="Ribosomal RNA large subunit methyltransferase M"/>
    <property type="match status" value="1"/>
</dbReference>
<dbReference type="FunFam" id="3.40.50.150:FF:000020">
    <property type="entry name" value="Ribosomal RNA large subunit methyltransferase M"/>
    <property type="match status" value="1"/>
</dbReference>
<dbReference type="Gene3D" id="3.30.2300.20">
    <property type="match status" value="1"/>
</dbReference>
<dbReference type="Gene3D" id="3.30.70.2810">
    <property type="match status" value="1"/>
</dbReference>
<dbReference type="Gene3D" id="3.40.50.150">
    <property type="entry name" value="Vaccinia Virus protein VP39"/>
    <property type="match status" value="1"/>
</dbReference>
<dbReference type="HAMAP" id="MF_01551">
    <property type="entry name" value="23SrRNA_methyltr_M"/>
    <property type="match status" value="1"/>
</dbReference>
<dbReference type="InterPro" id="IPR040739">
    <property type="entry name" value="RlmM_FDX"/>
</dbReference>
<dbReference type="InterPro" id="IPR048646">
    <property type="entry name" value="RlmM_THUMP-like"/>
</dbReference>
<dbReference type="InterPro" id="IPR002877">
    <property type="entry name" value="RNA_MeTrfase_FtsJ_dom"/>
</dbReference>
<dbReference type="InterPro" id="IPR011224">
    <property type="entry name" value="rRNA_MeTrfase_M"/>
</dbReference>
<dbReference type="InterPro" id="IPR029063">
    <property type="entry name" value="SAM-dependent_MTases_sf"/>
</dbReference>
<dbReference type="NCBIfam" id="NF008734">
    <property type="entry name" value="PRK11760.1"/>
    <property type="match status" value="1"/>
</dbReference>
<dbReference type="PANTHER" id="PTHR37524">
    <property type="entry name" value="RIBOSOMAL RNA LARGE SUBUNIT METHYLTRANSFERASE M"/>
    <property type="match status" value="1"/>
</dbReference>
<dbReference type="PANTHER" id="PTHR37524:SF2">
    <property type="entry name" value="RIBOSOMAL RNA METHYLTRANSFERASE FTSJ DOMAIN-CONTAINING PROTEIN"/>
    <property type="match status" value="1"/>
</dbReference>
<dbReference type="Pfam" id="PF01728">
    <property type="entry name" value="FtsJ"/>
    <property type="match status" value="1"/>
</dbReference>
<dbReference type="Pfam" id="PF18125">
    <property type="entry name" value="RlmM_FDX"/>
    <property type="match status" value="1"/>
</dbReference>
<dbReference type="Pfam" id="PF21239">
    <property type="entry name" value="RLMM_N"/>
    <property type="match status" value="1"/>
</dbReference>
<dbReference type="PIRSF" id="PIRSF028774">
    <property type="entry name" value="UCP028774"/>
    <property type="match status" value="1"/>
</dbReference>
<dbReference type="SUPFAM" id="SSF53335">
    <property type="entry name" value="S-adenosyl-L-methionine-dependent methyltransferases"/>
    <property type="match status" value="1"/>
</dbReference>
<comment type="function">
    <text evidence="1">Catalyzes the 2'-O-methylation at nucleotide C2498 in 23S rRNA.</text>
</comment>
<comment type="catalytic activity">
    <reaction evidence="1">
        <text>cytidine(2498) in 23S rRNA + S-adenosyl-L-methionine = 2'-O-methylcytidine(2498) in 23S rRNA + S-adenosyl-L-homocysteine + H(+)</text>
        <dbReference type="Rhea" id="RHEA:42788"/>
        <dbReference type="Rhea" id="RHEA-COMP:10244"/>
        <dbReference type="Rhea" id="RHEA-COMP:10245"/>
        <dbReference type="ChEBI" id="CHEBI:15378"/>
        <dbReference type="ChEBI" id="CHEBI:57856"/>
        <dbReference type="ChEBI" id="CHEBI:59789"/>
        <dbReference type="ChEBI" id="CHEBI:74495"/>
        <dbReference type="ChEBI" id="CHEBI:82748"/>
        <dbReference type="EC" id="2.1.1.186"/>
    </reaction>
</comment>
<comment type="subunit">
    <text evidence="1">Monomer.</text>
</comment>
<comment type="subcellular location">
    <subcellularLocation>
        <location evidence="1">Cytoplasm</location>
    </subcellularLocation>
</comment>
<comment type="similarity">
    <text evidence="1">Belongs to the class I-like SAM-binding methyltransferase superfamily. RNA methyltransferase RlmE family. RlmM subfamily.</text>
</comment>
<organism>
    <name type="scientific">Escherichia coli (strain 55989 / EAEC)</name>
    <dbReference type="NCBI Taxonomy" id="585055"/>
    <lineage>
        <taxon>Bacteria</taxon>
        <taxon>Pseudomonadati</taxon>
        <taxon>Pseudomonadota</taxon>
        <taxon>Gammaproteobacteria</taxon>
        <taxon>Enterobacterales</taxon>
        <taxon>Enterobacteriaceae</taxon>
        <taxon>Escherichia</taxon>
    </lineage>
</organism>
<name>RLMM_ECO55</name>
<evidence type="ECO:0000255" key="1">
    <source>
        <dbReference type="HAMAP-Rule" id="MF_01551"/>
    </source>
</evidence>
<gene>
    <name evidence="1" type="primary">rlmM</name>
    <name type="ordered locus">EC55989_3085</name>
</gene>
<protein>
    <recommendedName>
        <fullName evidence="1">Ribosomal RNA large subunit methyltransferase M</fullName>
        <ecNumber evidence="1">2.1.1.186</ecNumber>
    </recommendedName>
    <alternativeName>
        <fullName evidence="1">23S rRNA (cytidine2498-2'-O)-methyltransferase</fullName>
    </alternativeName>
    <alternativeName>
        <fullName evidence="1">23S rRNA 2'-O-ribose methyltransferase RlmM</fullName>
    </alternativeName>
</protein>